<proteinExistence type="inferred from homology"/>
<protein>
    <recommendedName>
        <fullName>Histidine biosynthesis bifunctional protein HisIE</fullName>
    </recommendedName>
    <domain>
        <recommendedName>
            <fullName evidence="1">Phosphoribosyl-AMP cyclohydrolase</fullName>
            <shortName evidence="1">PRA-CH</shortName>
            <ecNumber>3.5.4.19</ecNumber>
        </recommendedName>
    </domain>
    <domain>
        <recommendedName>
            <fullName evidence="1">Phosphoribosyl-ATP pyrophosphatase</fullName>
            <shortName evidence="1">PRA-PH</shortName>
            <ecNumber>3.6.1.31</ecNumber>
        </recommendedName>
    </domain>
</protein>
<sequence length="203" mass="22841">MLTEQQRRELDWEKTDGLMPVIVQHAVSGEVLMLGYMNPEALDKTIESGKVTFFSRTKQRLWTKGETSGNFLNVVNIAPDCDNDTLLVLANPIGPTCHKGTSSCFGDTAHQWLFLYQLEQLLAERKSADPETSYTAKLYASGTKRIAQKVGEEGVETALAATVHDRFELTNEASDLMYHLLVLLQDQDLDLTTVIENLRKRHQ</sequence>
<organism>
    <name type="scientific">Shigella sonnei (strain Ss046)</name>
    <dbReference type="NCBI Taxonomy" id="300269"/>
    <lineage>
        <taxon>Bacteria</taxon>
        <taxon>Pseudomonadati</taxon>
        <taxon>Pseudomonadota</taxon>
        <taxon>Gammaproteobacteria</taxon>
        <taxon>Enterobacterales</taxon>
        <taxon>Enterobacteriaceae</taxon>
        <taxon>Shigella</taxon>
    </lineage>
</organism>
<comment type="catalytic activity">
    <reaction>
        <text>1-(5-phospho-beta-D-ribosyl)-ATP + H2O = 1-(5-phospho-beta-D-ribosyl)-5'-AMP + diphosphate + H(+)</text>
        <dbReference type="Rhea" id="RHEA:22828"/>
        <dbReference type="ChEBI" id="CHEBI:15377"/>
        <dbReference type="ChEBI" id="CHEBI:15378"/>
        <dbReference type="ChEBI" id="CHEBI:33019"/>
        <dbReference type="ChEBI" id="CHEBI:59457"/>
        <dbReference type="ChEBI" id="CHEBI:73183"/>
        <dbReference type="EC" id="3.6.1.31"/>
    </reaction>
</comment>
<comment type="catalytic activity">
    <reaction>
        <text>1-(5-phospho-beta-D-ribosyl)-5'-AMP + H2O = 1-(5-phospho-beta-D-ribosyl)-5-[(5-phospho-beta-D-ribosylamino)methylideneamino]imidazole-4-carboxamide</text>
        <dbReference type="Rhea" id="RHEA:20049"/>
        <dbReference type="ChEBI" id="CHEBI:15377"/>
        <dbReference type="ChEBI" id="CHEBI:58435"/>
        <dbReference type="ChEBI" id="CHEBI:59457"/>
        <dbReference type="EC" id="3.5.4.19"/>
    </reaction>
</comment>
<comment type="pathway">
    <text evidence="1">Amino-acid biosynthesis; L-histidine biosynthesis; L-histidine from 5-phospho-alpha-D-ribose 1-diphosphate: step 2/9.</text>
</comment>
<comment type="pathway">
    <text evidence="1">Amino-acid biosynthesis; L-histidine biosynthesis; L-histidine from 5-phospho-alpha-D-ribose 1-diphosphate: step 3/9.</text>
</comment>
<comment type="subcellular location">
    <subcellularLocation>
        <location evidence="1">Cytoplasm</location>
    </subcellularLocation>
</comment>
<comment type="similarity">
    <text evidence="2">In the N-terminal section; belongs to the PRA-CH family.</text>
</comment>
<comment type="similarity">
    <text evidence="2">In the C-terminal section; belongs to the PRA-PH family.</text>
</comment>
<reference evidence="3" key="1">
    <citation type="journal article" date="2005" name="Nucleic Acids Res.">
        <title>Genome dynamics and diversity of Shigella species, the etiologic agents of bacillary dysentery.</title>
        <authorList>
            <person name="Yang F."/>
            <person name="Yang J."/>
            <person name="Zhang X."/>
            <person name="Chen L."/>
            <person name="Jiang Y."/>
            <person name="Yan Y."/>
            <person name="Tang X."/>
            <person name="Wang J."/>
            <person name="Xiong Z."/>
            <person name="Dong J."/>
            <person name="Xue Y."/>
            <person name="Zhu Y."/>
            <person name="Xu X."/>
            <person name="Sun L."/>
            <person name="Chen S."/>
            <person name="Nie H."/>
            <person name="Peng J."/>
            <person name="Xu J."/>
            <person name="Wang Y."/>
            <person name="Yuan Z."/>
            <person name="Wen Y."/>
            <person name="Yao Z."/>
            <person name="Shen Y."/>
            <person name="Qiang B."/>
            <person name="Hou Y."/>
            <person name="Yu J."/>
            <person name="Jin Q."/>
        </authorList>
    </citation>
    <scope>NUCLEOTIDE SEQUENCE [LARGE SCALE GENOMIC DNA]</scope>
    <source>
        <strain>Ss046</strain>
    </source>
</reference>
<evidence type="ECO:0000250" key="1">
    <source>
        <dbReference type="UniProtKB" id="Q9S5G3"/>
    </source>
</evidence>
<evidence type="ECO:0000255" key="2"/>
<evidence type="ECO:0000312" key="3">
    <source>
        <dbReference type="EMBL" id="AAZ88753.1"/>
    </source>
</evidence>
<name>HIS2_SHISS</name>
<keyword id="KW-0028">Amino-acid biosynthesis</keyword>
<keyword id="KW-0067">ATP-binding</keyword>
<keyword id="KW-0963">Cytoplasm</keyword>
<keyword id="KW-0368">Histidine biosynthesis</keyword>
<keyword id="KW-0378">Hydrolase</keyword>
<keyword id="KW-0511">Multifunctional enzyme</keyword>
<keyword id="KW-0547">Nucleotide-binding</keyword>
<keyword id="KW-1185">Reference proteome</keyword>
<feature type="chain" id="PRO_0000390789" description="Histidine biosynthesis bifunctional protein HisIE">
    <location>
        <begin position="1"/>
        <end position="203"/>
    </location>
</feature>
<feature type="region of interest" description="Phosphoribosyl-AMP cyclohydrolase" evidence="2">
    <location>
        <begin position="1"/>
        <end position="114"/>
    </location>
</feature>
<feature type="region of interest" description="Phosphoribosyl-ATP pyrophosphohydrolase" evidence="2">
    <location>
        <begin position="115"/>
        <end position="203"/>
    </location>
</feature>
<dbReference type="EC" id="3.5.4.19"/>
<dbReference type="EC" id="3.6.1.31"/>
<dbReference type="EMBL" id="CP000038">
    <property type="protein sequence ID" value="AAZ88753.1"/>
    <property type="molecule type" value="Genomic_DNA"/>
</dbReference>
<dbReference type="RefSeq" id="WP_000954872.1">
    <property type="nucleotide sequence ID" value="NC_007384.1"/>
</dbReference>
<dbReference type="SMR" id="Q3Z0F9"/>
<dbReference type="GeneID" id="93775147"/>
<dbReference type="KEGG" id="ssn:SSON_2097"/>
<dbReference type="HOGENOM" id="CLU_048577_3_1_6"/>
<dbReference type="UniPathway" id="UPA00031">
    <property type="reaction ID" value="UER00007"/>
</dbReference>
<dbReference type="UniPathway" id="UPA00031">
    <property type="reaction ID" value="UER00008"/>
</dbReference>
<dbReference type="Proteomes" id="UP000002529">
    <property type="component" value="Chromosome"/>
</dbReference>
<dbReference type="GO" id="GO:0005737">
    <property type="term" value="C:cytoplasm"/>
    <property type="evidence" value="ECO:0007669"/>
    <property type="project" value="UniProtKB-SubCell"/>
</dbReference>
<dbReference type="GO" id="GO:0005524">
    <property type="term" value="F:ATP binding"/>
    <property type="evidence" value="ECO:0007669"/>
    <property type="project" value="UniProtKB-KW"/>
</dbReference>
<dbReference type="GO" id="GO:0004635">
    <property type="term" value="F:phosphoribosyl-AMP cyclohydrolase activity"/>
    <property type="evidence" value="ECO:0007669"/>
    <property type="project" value="UniProtKB-UniRule"/>
</dbReference>
<dbReference type="GO" id="GO:0004636">
    <property type="term" value="F:phosphoribosyl-ATP diphosphatase activity"/>
    <property type="evidence" value="ECO:0007669"/>
    <property type="project" value="UniProtKB-UniRule"/>
</dbReference>
<dbReference type="GO" id="GO:0000105">
    <property type="term" value="P:L-histidine biosynthetic process"/>
    <property type="evidence" value="ECO:0007669"/>
    <property type="project" value="UniProtKB-UniRule"/>
</dbReference>
<dbReference type="CDD" id="cd11534">
    <property type="entry name" value="NTP-PPase_HisIE_like"/>
    <property type="match status" value="1"/>
</dbReference>
<dbReference type="FunFam" id="1.10.287.1080:FF:000002">
    <property type="entry name" value="Histidine biosynthesis bifunctional protein HisIE"/>
    <property type="match status" value="1"/>
</dbReference>
<dbReference type="FunFam" id="3.10.20.810:FF:000001">
    <property type="entry name" value="Histidine biosynthesis bifunctional protein HisIE"/>
    <property type="match status" value="1"/>
</dbReference>
<dbReference type="Gene3D" id="1.10.287.1080">
    <property type="entry name" value="MazG-like"/>
    <property type="match status" value="1"/>
</dbReference>
<dbReference type="Gene3D" id="3.10.20.810">
    <property type="entry name" value="Phosphoribosyl-AMP cyclohydrolase"/>
    <property type="match status" value="1"/>
</dbReference>
<dbReference type="HAMAP" id="MF_01020">
    <property type="entry name" value="HisE"/>
    <property type="match status" value="1"/>
</dbReference>
<dbReference type="HAMAP" id="MF_01019">
    <property type="entry name" value="HisIE"/>
    <property type="match status" value="1"/>
</dbReference>
<dbReference type="InterPro" id="IPR023019">
    <property type="entry name" value="His_synth_HisIE"/>
</dbReference>
<dbReference type="InterPro" id="IPR008179">
    <property type="entry name" value="HisE"/>
</dbReference>
<dbReference type="InterPro" id="IPR021130">
    <property type="entry name" value="PRib-ATP_PPHydrolase-like"/>
</dbReference>
<dbReference type="InterPro" id="IPR002496">
    <property type="entry name" value="PRib_AMP_CycHydrolase_dom"/>
</dbReference>
<dbReference type="InterPro" id="IPR038019">
    <property type="entry name" value="PRib_AMP_CycHydrolase_sf"/>
</dbReference>
<dbReference type="NCBIfam" id="TIGR03188">
    <property type="entry name" value="histidine_hisI"/>
    <property type="match status" value="1"/>
</dbReference>
<dbReference type="NCBIfam" id="NF000768">
    <property type="entry name" value="PRK00051.1"/>
    <property type="match status" value="1"/>
</dbReference>
<dbReference type="NCBIfam" id="NF002747">
    <property type="entry name" value="PRK02759.1"/>
    <property type="match status" value="1"/>
</dbReference>
<dbReference type="PANTHER" id="PTHR42945">
    <property type="entry name" value="HISTIDINE BIOSYNTHESIS BIFUNCTIONAL PROTEIN"/>
    <property type="match status" value="1"/>
</dbReference>
<dbReference type="PANTHER" id="PTHR42945:SF9">
    <property type="entry name" value="HISTIDINE BIOSYNTHESIS BIFUNCTIONAL PROTEIN HISIE"/>
    <property type="match status" value="1"/>
</dbReference>
<dbReference type="Pfam" id="PF01502">
    <property type="entry name" value="PRA-CH"/>
    <property type="match status" value="1"/>
</dbReference>
<dbReference type="Pfam" id="PF01503">
    <property type="entry name" value="PRA-PH"/>
    <property type="match status" value="1"/>
</dbReference>
<dbReference type="SUPFAM" id="SSF101386">
    <property type="entry name" value="all-alpha NTP pyrophosphatases"/>
    <property type="match status" value="1"/>
</dbReference>
<dbReference type="SUPFAM" id="SSF141734">
    <property type="entry name" value="HisI-like"/>
    <property type="match status" value="1"/>
</dbReference>
<gene>
    <name evidence="3" type="primary">hisI</name>
    <name type="synonym">hisIE</name>
    <name type="ordered locus">SSON_2097</name>
</gene>
<accession>Q3Z0F9</accession>